<gene>
    <name type="ordered locus">gll3754</name>
</gene>
<protein>
    <recommendedName>
        <fullName evidence="1">UPF0102 protein gll3754</fullName>
    </recommendedName>
</protein>
<feature type="chain" id="PRO_1000009221" description="UPF0102 protein gll3754">
    <location>
        <begin position="1"/>
        <end position="126"/>
    </location>
</feature>
<sequence>MDRRHRFALQAEIWVADHLAAQGGLVLARRWRCRGGEIDLVVRLGGVLCFVEVKARGGNSWDSAGWEAVGAVKQRRLLLAAALFLAAHPELARSVCRFDVALVGRDPGGGVRLVAYIAGAFEGSGR</sequence>
<reference key="1">
    <citation type="journal article" date="2003" name="DNA Res.">
        <title>Complete genome structure of Gloeobacter violaceus PCC 7421, a cyanobacterium that lacks thylakoids.</title>
        <authorList>
            <person name="Nakamura Y."/>
            <person name="Kaneko T."/>
            <person name="Sato S."/>
            <person name="Mimuro M."/>
            <person name="Miyashita H."/>
            <person name="Tsuchiya T."/>
            <person name="Sasamoto S."/>
            <person name="Watanabe A."/>
            <person name="Kawashima K."/>
            <person name="Kishida Y."/>
            <person name="Kiyokawa C."/>
            <person name="Kohara M."/>
            <person name="Matsumoto M."/>
            <person name="Matsuno A."/>
            <person name="Nakazaki N."/>
            <person name="Shimpo S."/>
            <person name="Takeuchi C."/>
            <person name="Yamada M."/>
            <person name="Tabata S."/>
        </authorList>
    </citation>
    <scope>NUCLEOTIDE SEQUENCE [LARGE SCALE GENOMIC DNA]</scope>
    <source>
        <strain>ATCC 29082 / PCC 7421</strain>
    </source>
</reference>
<accession>Q7NEX4</accession>
<dbReference type="EMBL" id="BA000045">
    <property type="protein sequence ID" value="BAC91695.1"/>
    <property type="molecule type" value="Genomic_DNA"/>
</dbReference>
<dbReference type="RefSeq" id="NP_926700.1">
    <property type="nucleotide sequence ID" value="NC_005125.1"/>
</dbReference>
<dbReference type="RefSeq" id="WP_011143743.1">
    <property type="nucleotide sequence ID" value="NC_005125.1"/>
</dbReference>
<dbReference type="SMR" id="Q7NEX4"/>
<dbReference type="FunCoup" id="Q7NEX4">
    <property type="interactions" value="17"/>
</dbReference>
<dbReference type="STRING" id="251221.gene:10761270"/>
<dbReference type="EnsemblBacteria" id="BAC91695">
    <property type="protein sequence ID" value="BAC91695"/>
    <property type="gene ID" value="BAC91695"/>
</dbReference>
<dbReference type="KEGG" id="gvi:gll3754"/>
<dbReference type="eggNOG" id="COG0792">
    <property type="taxonomic scope" value="Bacteria"/>
</dbReference>
<dbReference type="HOGENOM" id="CLU_115353_2_3_3"/>
<dbReference type="InParanoid" id="Q7NEX4"/>
<dbReference type="OrthoDB" id="9802516at2"/>
<dbReference type="PhylomeDB" id="Q7NEX4"/>
<dbReference type="Proteomes" id="UP000000557">
    <property type="component" value="Chromosome"/>
</dbReference>
<dbReference type="GO" id="GO:0003676">
    <property type="term" value="F:nucleic acid binding"/>
    <property type="evidence" value="ECO:0007669"/>
    <property type="project" value="InterPro"/>
</dbReference>
<dbReference type="Gene3D" id="3.40.1350.10">
    <property type="match status" value="1"/>
</dbReference>
<dbReference type="HAMAP" id="MF_00048">
    <property type="entry name" value="UPF0102"/>
    <property type="match status" value="1"/>
</dbReference>
<dbReference type="InterPro" id="IPR011335">
    <property type="entry name" value="Restrct_endonuc-II-like"/>
</dbReference>
<dbReference type="InterPro" id="IPR011856">
    <property type="entry name" value="tRNA_endonuc-like_dom_sf"/>
</dbReference>
<dbReference type="InterPro" id="IPR003509">
    <property type="entry name" value="UPF0102_YraN-like"/>
</dbReference>
<dbReference type="NCBIfam" id="TIGR00252">
    <property type="entry name" value="YraN family protein"/>
    <property type="match status" value="1"/>
</dbReference>
<dbReference type="PANTHER" id="PTHR34039">
    <property type="entry name" value="UPF0102 PROTEIN YRAN"/>
    <property type="match status" value="1"/>
</dbReference>
<dbReference type="PANTHER" id="PTHR34039:SF1">
    <property type="entry name" value="UPF0102 PROTEIN YRAN"/>
    <property type="match status" value="1"/>
</dbReference>
<dbReference type="Pfam" id="PF02021">
    <property type="entry name" value="UPF0102"/>
    <property type="match status" value="1"/>
</dbReference>
<dbReference type="SUPFAM" id="SSF52980">
    <property type="entry name" value="Restriction endonuclease-like"/>
    <property type="match status" value="1"/>
</dbReference>
<comment type="similarity">
    <text evidence="1">Belongs to the UPF0102 family.</text>
</comment>
<organism>
    <name type="scientific">Gloeobacter violaceus (strain ATCC 29082 / PCC 7421)</name>
    <dbReference type="NCBI Taxonomy" id="251221"/>
    <lineage>
        <taxon>Bacteria</taxon>
        <taxon>Bacillati</taxon>
        <taxon>Cyanobacteriota</taxon>
        <taxon>Cyanophyceae</taxon>
        <taxon>Gloeobacterales</taxon>
        <taxon>Gloeobacteraceae</taxon>
        <taxon>Gloeobacter</taxon>
    </lineage>
</organism>
<name>Y3754_GLOVI</name>
<keyword id="KW-1185">Reference proteome</keyword>
<evidence type="ECO:0000255" key="1">
    <source>
        <dbReference type="HAMAP-Rule" id="MF_00048"/>
    </source>
</evidence>
<proteinExistence type="inferred from homology"/>